<reference key="1">
    <citation type="journal article" date="2008" name="DNA Res.">
        <title>Complete genome sequence of Finegoldia magna, an anaerobic opportunistic pathogen.</title>
        <authorList>
            <person name="Goto T."/>
            <person name="Yamashita A."/>
            <person name="Hirakawa H."/>
            <person name="Matsutani M."/>
            <person name="Todo K."/>
            <person name="Ohshima K."/>
            <person name="Toh H."/>
            <person name="Miyamoto K."/>
            <person name="Kuhara S."/>
            <person name="Hattori M."/>
            <person name="Shimizu T."/>
            <person name="Akimoto S."/>
        </authorList>
    </citation>
    <scope>NUCLEOTIDE SEQUENCE [LARGE SCALE GENOMIC DNA]</scope>
    <source>
        <strain>ATCC 29328 / DSM 20472 / WAL 2508</strain>
    </source>
</reference>
<gene>
    <name evidence="1" type="primary">glmM</name>
    <name type="ordered locus">FMG_1223</name>
</gene>
<feature type="chain" id="PRO_1000201100" description="Phosphoglucosamine mutase">
    <location>
        <begin position="1"/>
        <end position="449"/>
    </location>
</feature>
<feature type="active site" description="Phosphoserine intermediate" evidence="1">
    <location>
        <position position="99"/>
    </location>
</feature>
<feature type="binding site" description="via phosphate group" evidence="1">
    <location>
        <position position="99"/>
    </location>
    <ligand>
        <name>Mg(2+)</name>
        <dbReference type="ChEBI" id="CHEBI:18420"/>
    </ligand>
</feature>
<feature type="binding site" evidence="1">
    <location>
        <position position="239"/>
    </location>
    <ligand>
        <name>Mg(2+)</name>
        <dbReference type="ChEBI" id="CHEBI:18420"/>
    </ligand>
</feature>
<feature type="binding site" evidence="1">
    <location>
        <position position="241"/>
    </location>
    <ligand>
        <name>Mg(2+)</name>
        <dbReference type="ChEBI" id="CHEBI:18420"/>
    </ligand>
</feature>
<feature type="binding site" evidence="1">
    <location>
        <position position="243"/>
    </location>
    <ligand>
        <name>Mg(2+)</name>
        <dbReference type="ChEBI" id="CHEBI:18420"/>
    </ligand>
</feature>
<feature type="modified residue" description="Phosphoserine" evidence="1">
    <location>
        <position position="99"/>
    </location>
</feature>
<accession>B0S2Q1</accession>
<dbReference type="EC" id="5.4.2.10" evidence="1"/>
<dbReference type="EMBL" id="AP008971">
    <property type="protein sequence ID" value="BAG08641.1"/>
    <property type="molecule type" value="Genomic_DNA"/>
</dbReference>
<dbReference type="RefSeq" id="WP_012290907.1">
    <property type="nucleotide sequence ID" value="NC_010376.1"/>
</dbReference>
<dbReference type="SMR" id="B0S2Q1"/>
<dbReference type="STRING" id="334413.FMG_1223"/>
<dbReference type="KEGG" id="fma:FMG_1223"/>
<dbReference type="eggNOG" id="COG1109">
    <property type="taxonomic scope" value="Bacteria"/>
</dbReference>
<dbReference type="HOGENOM" id="CLU_016950_7_0_9"/>
<dbReference type="Proteomes" id="UP000001319">
    <property type="component" value="Chromosome"/>
</dbReference>
<dbReference type="GO" id="GO:0005829">
    <property type="term" value="C:cytosol"/>
    <property type="evidence" value="ECO:0007669"/>
    <property type="project" value="TreeGrafter"/>
</dbReference>
<dbReference type="GO" id="GO:0000287">
    <property type="term" value="F:magnesium ion binding"/>
    <property type="evidence" value="ECO:0007669"/>
    <property type="project" value="UniProtKB-UniRule"/>
</dbReference>
<dbReference type="GO" id="GO:0008966">
    <property type="term" value="F:phosphoglucosamine mutase activity"/>
    <property type="evidence" value="ECO:0007669"/>
    <property type="project" value="UniProtKB-UniRule"/>
</dbReference>
<dbReference type="GO" id="GO:0004615">
    <property type="term" value="F:phosphomannomutase activity"/>
    <property type="evidence" value="ECO:0007669"/>
    <property type="project" value="TreeGrafter"/>
</dbReference>
<dbReference type="GO" id="GO:0005975">
    <property type="term" value="P:carbohydrate metabolic process"/>
    <property type="evidence" value="ECO:0007669"/>
    <property type="project" value="InterPro"/>
</dbReference>
<dbReference type="GO" id="GO:0009252">
    <property type="term" value="P:peptidoglycan biosynthetic process"/>
    <property type="evidence" value="ECO:0007669"/>
    <property type="project" value="TreeGrafter"/>
</dbReference>
<dbReference type="GO" id="GO:0006048">
    <property type="term" value="P:UDP-N-acetylglucosamine biosynthetic process"/>
    <property type="evidence" value="ECO:0007669"/>
    <property type="project" value="TreeGrafter"/>
</dbReference>
<dbReference type="CDD" id="cd05802">
    <property type="entry name" value="GlmM"/>
    <property type="match status" value="1"/>
</dbReference>
<dbReference type="FunFam" id="3.30.310.50:FF:000001">
    <property type="entry name" value="Phosphoglucosamine mutase"/>
    <property type="match status" value="1"/>
</dbReference>
<dbReference type="FunFam" id="3.40.120.10:FF:000001">
    <property type="entry name" value="Phosphoglucosamine mutase"/>
    <property type="match status" value="1"/>
</dbReference>
<dbReference type="FunFam" id="3.40.120.10:FF:000002">
    <property type="entry name" value="Phosphoglucosamine mutase"/>
    <property type="match status" value="1"/>
</dbReference>
<dbReference type="Gene3D" id="3.40.120.10">
    <property type="entry name" value="Alpha-D-Glucose-1,6-Bisphosphate, subunit A, domain 3"/>
    <property type="match status" value="3"/>
</dbReference>
<dbReference type="Gene3D" id="3.30.310.50">
    <property type="entry name" value="Alpha-D-phosphohexomutase, C-terminal domain"/>
    <property type="match status" value="1"/>
</dbReference>
<dbReference type="HAMAP" id="MF_01554_B">
    <property type="entry name" value="GlmM_B"/>
    <property type="match status" value="1"/>
</dbReference>
<dbReference type="InterPro" id="IPR005844">
    <property type="entry name" value="A-D-PHexomutase_a/b/a-I"/>
</dbReference>
<dbReference type="InterPro" id="IPR016055">
    <property type="entry name" value="A-D-PHexomutase_a/b/a-I/II/III"/>
</dbReference>
<dbReference type="InterPro" id="IPR005845">
    <property type="entry name" value="A-D-PHexomutase_a/b/a-II"/>
</dbReference>
<dbReference type="InterPro" id="IPR005846">
    <property type="entry name" value="A-D-PHexomutase_a/b/a-III"/>
</dbReference>
<dbReference type="InterPro" id="IPR005843">
    <property type="entry name" value="A-D-PHexomutase_C"/>
</dbReference>
<dbReference type="InterPro" id="IPR036900">
    <property type="entry name" value="A-D-PHexomutase_C_sf"/>
</dbReference>
<dbReference type="InterPro" id="IPR016066">
    <property type="entry name" value="A-D-PHexomutase_CS"/>
</dbReference>
<dbReference type="InterPro" id="IPR005841">
    <property type="entry name" value="Alpha-D-phosphohexomutase_SF"/>
</dbReference>
<dbReference type="InterPro" id="IPR006352">
    <property type="entry name" value="GlmM_bact"/>
</dbReference>
<dbReference type="InterPro" id="IPR050060">
    <property type="entry name" value="Phosphoglucosamine_mutase"/>
</dbReference>
<dbReference type="NCBIfam" id="TIGR01455">
    <property type="entry name" value="glmM"/>
    <property type="match status" value="1"/>
</dbReference>
<dbReference type="PANTHER" id="PTHR42946:SF1">
    <property type="entry name" value="PHOSPHOGLUCOMUTASE (ALPHA-D-GLUCOSE-1,6-BISPHOSPHATE-DEPENDENT)"/>
    <property type="match status" value="1"/>
</dbReference>
<dbReference type="PANTHER" id="PTHR42946">
    <property type="entry name" value="PHOSPHOHEXOSE MUTASE"/>
    <property type="match status" value="1"/>
</dbReference>
<dbReference type="Pfam" id="PF02878">
    <property type="entry name" value="PGM_PMM_I"/>
    <property type="match status" value="1"/>
</dbReference>
<dbReference type="Pfam" id="PF02879">
    <property type="entry name" value="PGM_PMM_II"/>
    <property type="match status" value="1"/>
</dbReference>
<dbReference type="Pfam" id="PF02880">
    <property type="entry name" value="PGM_PMM_III"/>
    <property type="match status" value="1"/>
</dbReference>
<dbReference type="Pfam" id="PF00408">
    <property type="entry name" value="PGM_PMM_IV"/>
    <property type="match status" value="1"/>
</dbReference>
<dbReference type="PRINTS" id="PR00509">
    <property type="entry name" value="PGMPMM"/>
</dbReference>
<dbReference type="SUPFAM" id="SSF55957">
    <property type="entry name" value="Phosphoglucomutase, C-terminal domain"/>
    <property type="match status" value="1"/>
</dbReference>
<dbReference type="SUPFAM" id="SSF53738">
    <property type="entry name" value="Phosphoglucomutase, first 3 domains"/>
    <property type="match status" value="3"/>
</dbReference>
<dbReference type="PROSITE" id="PS00710">
    <property type="entry name" value="PGM_PMM"/>
    <property type="match status" value="1"/>
</dbReference>
<sequence length="449" mass="49923">MGKYFGTDGIRGVAGEDLTVELAYKLARAACYKLKDVDNKLIVIGKDTRISGDMLEAALISGITSMGFDVYRLGVIPTPAVAYLTRFYNACCGIVISASHNPYEFNGIKYFSNEGFKLKDSLEEEIEYLIDHQDEIDLKVTGEKVGRVYEEECARDTYINYLLSRVDLDLTGVKVSLDCGYGATSEIAPIIFNRLNADVTVTNTEYDGKNINFKCGSTNPEVISNLVKISESDMGFSFDGDGDRLIACDETGEIMDGDHVICAVGHFLKENNKLKNNAVVGTVMTNIGLIKSLKEIGVDVIKTQVGDRYVLEEMRKNGYIIGGEQSGHIIFIEDNTTGDGILSAIKLAEIAVKSKQKLSEMNNLMTSFPQVLVNAKVNNEYKKVYKDDEVINQKIAELEHEFKDEGRVLIRPSGTEPLIRVMIEGENQEYLEKKAIELKDLIEERCELI</sequence>
<protein>
    <recommendedName>
        <fullName evidence="1">Phosphoglucosamine mutase</fullName>
        <ecNumber evidence="1">5.4.2.10</ecNumber>
    </recommendedName>
</protein>
<comment type="function">
    <text evidence="1">Catalyzes the conversion of glucosamine-6-phosphate to glucosamine-1-phosphate.</text>
</comment>
<comment type="catalytic activity">
    <reaction evidence="1">
        <text>alpha-D-glucosamine 1-phosphate = D-glucosamine 6-phosphate</text>
        <dbReference type="Rhea" id="RHEA:23424"/>
        <dbReference type="ChEBI" id="CHEBI:58516"/>
        <dbReference type="ChEBI" id="CHEBI:58725"/>
        <dbReference type="EC" id="5.4.2.10"/>
    </reaction>
</comment>
<comment type="cofactor">
    <cofactor evidence="1">
        <name>Mg(2+)</name>
        <dbReference type="ChEBI" id="CHEBI:18420"/>
    </cofactor>
    <text evidence="1">Binds 1 Mg(2+) ion per subunit.</text>
</comment>
<comment type="PTM">
    <text evidence="1">Activated by phosphorylation.</text>
</comment>
<comment type="similarity">
    <text evidence="1">Belongs to the phosphohexose mutase family.</text>
</comment>
<proteinExistence type="inferred from homology"/>
<organism>
    <name type="scientific">Finegoldia magna (strain ATCC 29328 / DSM 20472 / WAL 2508)</name>
    <name type="common">Peptostreptococcus magnus</name>
    <dbReference type="NCBI Taxonomy" id="334413"/>
    <lineage>
        <taxon>Bacteria</taxon>
        <taxon>Bacillati</taxon>
        <taxon>Bacillota</taxon>
        <taxon>Tissierellia</taxon>
        <taxon>Tissierellales</taxon>
        <taxon>Peptoniphilaceae</taxon>
        <taxon>Finegoldia</taxon>
    </lineage>
</organism>
<evidence type="ECO:0000255" key="1">
    <source>
        <dbReference type="HAMAP-Rule" id="MF_01554"/>
    </source>
</evidence>
<keyword id="KW-0413">Isomerase</keyword>
<keyword id="KW-0460">Magnesium</keyword>
<keyword id="KW-0479">Metal-binding</keyword>
<keyword id="KW-0597">Phosphoprotein</keyword>
<keyword id="KW-1185">Reference proteome</keyword>
<name>GLMM_FINM2</name>